<dbReference type="EMBL" id="AM902716">
    <property type="protein sequence ID" value="CAP44417.1"/>
    <property type="molecule type" value="Genomic_DNA"/>
</dbReference>
<dbReference type="SMR" id="A9I7J3"/>
<dbReference type="STRING" id="94624.Bpet4069"/>
<dbReference type="KEGG" id="bpt:Bpet4069"/>
<dbReference type="eggNOG" id="COG2332">
    <property type="taxonomic scope" value="Bacteria"/>
</dbReference>
<dbReference type="Proteomes" id="UP000001225">
    <property type="component" value="Chromosome"/>
</dbReference>
<dbReference type="GO" id="GO:0005886">
    <property type="term" value="C:plasma membrane"/>
    <property type="evidence" value="ECO:0007669"/>
    <property type="project" value="UniProtKB-SubCell"/>
</dbReference>
<dbReference type="GO" id="GO:0020037">
    <property type="term" value="F:heme binding"/>
    <property type="evidence" value="ECO:0007669"/>
    <property type="project" value="InterPro"/>
</dbReference>
<dbReference type="GO" id="GO:0046872">
    <property type="term" value="F:metal ion binding"/>
    <property type="evidence" value="ECO:0007669"/>
    <property type="project" value="UniProtKB-KW"/>
</dbReference>
<dbReference type="GO" id="GO:0017004">
    <property type="term" value="P:cytochrome complex assembly"/>
    <property type="evidence" value="ECO:0007669"/>
    <property type="project" value="UniProtKB-KW"/>
</dbReference>
<dbReference type="FunFam" id="2.40.50.140:FF:000104">
    <property type="entry name" value="Cytochrome c-type biogenesis protein CcmE"/>
    <property type="match status" value="1"/>
</dbReference>
<dbReference type="Gene3D" id="2.40.50.140">
    <property type="entry name" value="Nucleic acid-binding proteins"/>
    <property type="match status" value="1"/>
</dbReference>
<dbReference type="HAMAP" id="MF_01959">
    <property type="entry name" value="CcmE"/>
    <property type="match status" value="1"/>
</dbReference>
<dbReference type="InterPro" id="IPR004329">
    <property type="entry name" value="CcmE"/>
</dbReference>
<dbReference type="InterPro" id="IPR036127">
    <property type="entry name" value="CcmE-like_sf"/>
</dbReference>
<dbReference type="InterPro" id="IPR012340">
    <property type="entry name" value="NA-bd_OB-fold"/>
</dbReference>
<dbReference type="NCBIfam" id="NF009727">
    <property type="entry name" value="PRK13254.1-1"/>
    <property type="match status" value="1"/>
</dbReference>
<dbReference type="NCBIfam" id="NF009729">
    <property type="entry name" value="PRK13254.1-3"/>
    <property type="match status" value="1"/>
</dbReference>
<dbReference type="NCBIfam" id="NF009731">
    <property type="entry name" value="PRK13254.1-5"/>
    <property type="match status" value="1"/>
</dbReference>
<dbReference type="PANTHER" id="PTHR34128">
    <property type="entry name" value="CYTOCHROME C-TYPE BIOGENESIS PROTEIN CCME HOMOLOG, MITOCHONDRIAL"/>
    <property type="match status" value="1"/>
</dbReference>
<dbReference type="PANTHER" id="PTHR34128:SF2">
    <property type="entry name" value="CYTOCHROME C-TYPE BIOGENESIS PROTEIN CCME HOMOLOG, MITOCHONDRIAL"/>
    <property type="match status" value="1"/>
</dbReference>
<dbReference type="Pfam" id="PF03100">
    <property type="entry name" value="CcmE"/>
    <property type="match status" value="1"/>
</dbReference>
<dbReference type="SUPFAM" id="SSF82093">
    <property type="entry name" value="Heme chaperone CcmE"/>
    <property type="match status" value="1"/>
</dbReference>
<name>CCME_BORPD</name>
<organism>
    <name type="scientific">Bordetella petrii (strain ATCC BAA-461 / DSM 12804 / CCUG 43448)</name>
    <dbReference type="NCBI Taxonomy" id="340100"/>
    <lineage>
        <taxon>Bacteria</taxon>
        <taxon>Pseudomonadati</taxon>
        <taxon>Pseudomonadota</taxon>
        <taxon>Betaproteobacteria</taxon>
        <taxon>Burkholderiales</taxon>
        <taxon>Alcaligenaceae</taxon>
        <taxon>Bordetella</taxon>
    </lineage>
</organism>
<feature type="chain" id="PRO_1000189006" description="Cytochrome c-type biogenesis protein CcmE">
    <location>
        <begin position="1"/>
        <end position="154"/>
    </location>
</feature>
<feature type="topological domain" description="Cytoplasmic" evidence="1">
    <location>
        <begin position="1"/>
        <end position="8"/>
    </location>
</feature>
<feature type="transmembrane region" description="Helical; Signal-anchor for type II membrane protein" evidence="1">
    <location>
        <begin position="9"/>
        <end position="29"/>
    </location>
</feature>
<feature type="topological domain" description="Periplasmic" evidence="1">
    <location>
        <begin position="30"/>
        <end position="154"/>
    </location>
</feature>
<feature type="region of interest" description="Disordered" evidence="2">
    <location>
        <begin position="130"/>
        <end position="154"/>
    </location>
</feature>
<feature type="binding site" description="covalent" evidence="1">
    <location>
        <position position="124"/>
    </location>
    <ligand>
        <name>heme</name>
        <dbReference type="ChEBI" id="CHEBI:30413"/>
    </ligand>
</feature>
<feature type="binding site" description="axial binding residue" evidence="1">
    <location>
        <position position="128"/>
    </location>
    <ligand>
        <name>heme</name>
        <dbReference type="ChEBI" id="CHEBI:30413"/>
    </ligand>
    <ligandPart>
        <name>Fe</name>
        <dbReference type="ChEBI" id="CHEBI:18248"/>
    </ligandPart>
</feature>
<accession>A9I7J3</accession>
<sequence>MTPQRKRRLVMLAALAGGVGVAVALALAALQQNINLFYSPSQIAAGEAPLHTRIRAGGLVQDGSLRRAPDSLAVQFGITDGVQQVLVRYDGILPDLFREGQGIVALGKLDAQGMLQADEVLAKHDQNYMPPEAAHALKQGAATSGGTPAAEPQP</sequence>
<proteinExistence type="inferred from homology"/>
<reference key="1">
    <citation type="journal article" date="2008" name="BMC Genomics">
        <title>The missing link: Bordetella petrii is endowed with both the metabolic versatility of environmental bacteria and virulence traits of pathogenic Bordetellae.</title>
        <authorList>
            <person name="Gross R."/>
            <person name="Guzman C.A."/>
            <person name="Sebaihia M."/>
            <person name="Martin dos Santos V.A.P."/>
            <person name="Pieper D.H."/>
            <person name="Koebnik R."/>
            <person name="Lechner M."/>
            <person name="Bartels D."/>
            <person name="Buhrmester J."/>
            <person name="Choudhuri J.V."/>
            <person name="Ebensen T."/>
            <person name="Gaigalat L."/>
            <person name="Herrmann S."/>
            <person name="Khachane A.N."/>
            <person name="Larisch C."/>
            <person name="Link S."/>
            <person name="Linke B."/>
            <person name="Meyer F."/>
            <person name="Mormann S."/>
            <person name="Nakunst D."/>
            <person name="Rueckert C."/>
            <person name="Schneiker-Bekel S."/>
            <person name="Schulze K."/>
            <person name="Voerholter F.-J."/>
            <person name="Yevsa T."/>
            <person name="Engle J.T."/>
            <person name="Goldman W.E."/>
            <person name="Puehler A."/>
            <person name="Goebel U.B."/>
            <person name="Goesmann A."/>
            <person name="Bloecker H."/>
            <person name="Kaiser O."/>
            <person name="Martinez-Arias R."/>
        </authorList>
    </citation>
    <scope>NUCLEOTIDE SEQUENCE [LARGE SCALE GENOMIC DNA]</scope>
    <source>
        <strain>ATCC BAA-461 / DSM 12804 / CCUG 43448</strain>
    </source>
</reference>
<comment type="function">
    <text evidence="1">Heme chaperone required for the biogenesis of c-type cytochromes. Transiently binds heme delivered by CcmC and transfers the heme to apo-cytochromes in a process facilitated by CcmF and CcmH.</text>
</comment>
<comment type="subcellular location">
    <subcellularLocation>
        <location evidence="1">Cell inner membrane</location>
        <topology evidence="1">Single-pass type II membrane protein</topology>
        <orientation evidence="1">Periplasmic side</orientation>
    </subcellularLocation>
</comment>
<comment type="similarity">
    <text evidence="1">Belongs to the CcmE/CycJ family.</text>
</comment>
<gene>
    <name evidence="1" type="primary">ccmE</name>
    <name evidence="1" type="synonym">cycJ</name>
    <name type="ordered locus">Bpet4069</name>
</gene>
<evidence type="ECO:0000255" key="1">
    <source>
        <dbReference type="HAMAP-Rule" id="MF_01959"/>
    </source>
</evidence>
<evidence type="ECO:0000256" key="2">
    <source>
        <dbReference type="SAM" id="MobiDB-lite"/>
    </source>
</evidence>
<protein>
    <recommendedName>
        <fullName evidence="1">Cytochrome c-type biogenesis protein CcmE</fullName>
    </recommendedName>
    <alternativeName>
        <fullName evidence="1">Cytochrome c maturation protein E</fullName>
    </alternativeName>
    <alternativeName>
        <fullName evidence="1">Heme chaperone CcmE</fullName>
    </alternativeName>
</protein>
<keyword id="KW-0997">Cell inner membrane</keyword>
<keyword id="KW-1003">Cell membrane</keyword>
<keyword id="KW-0201">Cytochrome c-type biogenesis</keyword>
<keyword id="KW-0349">Heme</keyword>
<keyword id="KW-0408">Iron</keyword>
<keyword id="KW-0472">Membrane</keyword>
<keyword id="KW-0479">Metal-binding</keyword>
<keyword id="KW-0735">Signal-anchor</keyword>
<keyword id="KW-0812">Transmembrane</keyword>
<keyword id="KW-1133">Transmembrane helix</keyword>